<organism>
    <name type="scientific">Salinispora arenicola (strain CNS-205)</name>
    <dbReference type="NCBI Taxonomy" id="391037"/>
    <lineage>
        <taxon>Bacteria</taxon>
        <taxon>Bacillati</taxon>
        <taxon>Actinomycetota</taxon>
        <taxon>Actinomycetes</taxon>
        <taxon>Micromonosporales</taxon>
        <taxon>Micromonosporaceae</taxon>
        <taxon>Salinispora</taxon>
    </lineage>
</organism>
<proteinExistence type="inferred from homology"/>
<feature type="chain" id="PRO_0000334486" description="Na(+)/H(+) antiporter NhaA 1">
    <location>
        <begin position="1"/>
        <end position="652"/>
    </location>
</feature>
<feature type="transmembrane region" description="Helical" evidence="1">
    <location>
        <begin position="27"/>
        <end position="47"/>
    </location>
</feature>
<feature type="transmembrane region" description="Helical" evidence="1">
    <location>
        <begin position="78"/>
        <end position="98"/>
    </location>
</feature>
<feature type="transmembrane region" description="Helical" evidence="1">
    <location>
        <begin position="114"/>
        <end position="134"/>
    </location>
</feature>
<feature type="transmembrane region" description="Helical" evidence="1">
    <location>
        <begin position="142"/>
        <end position="162"/>
    </location>
</feature>
<feature type="transmembrane region" description="Helical" evidence="1">
    <location>
        <begin position="173"/>
        <end position="193"/>
    </location>
</feature>
<feature type="transmembrane region" description="Helical" evidence="1">
    <location>
        <begin position="200"/>
        <end position="220"/>
    </location>
</feature>
<feature type="transmembrane region" description="Helical" evidence="1">
    <location>
        <begin position="227"/>
        <end position="247"/>
    </location>
</feature>
<feature type="transmembrane region" description="Helical" evidence="1">
    <location>
        <begin position="312"/>
        <end position="332"/>
    </location>
</feature>
<feature type="transmembrane region" description="Helical" evidence="1">
    <location>
        <begin position="343"/>
        <end position="363"/>
    </location>
</feature>
<feature type="transmembrane region" description="Helical" evidence="1">
    <location>
        <begin position="376"/>
        <end position="396"/>
    </location>
</feature>
<feature type="transmembrane region" description="Helical" evidence="1">
    <location>
        <begin position="411"/>
        <end position="431"/>
    </location>
</feature>
<feature type="domain" description="Thioredoxin">
    <location>
        <begin position="428"/>
        <end position="623"/>
    </location>
</feature>
<feature type="region of interest" description="Na(+)/H(+) antiporter NhaA">
    <location>
        <begin position="1"/>
        <end position="427"/>
    </location>
</feature>
<feature type="region of interest" description="Disordered" evidence="2">
    <location>
        <begin position="626"/>
        <end position="652"/>
    </location>
</feature>
<feature type="compositionally biased region" description="Basic and acidic residues" evidence="2">
    <location>
        <begin position="628"/>
        <end position="642"/>
    </location>
</feature>
<name>NHAA1_SALAI</name>
<accession>A8LVS8</accession>
<sequence>MTGELPRGRRWSARTTWASRLNVPLRAFLHTETGSARVLLAAAVVALAWANLDESSYESLWGNTLSVQLGGWQLSHDLRYWVNSGLMTFFFLVIGLEVRRDFDLGELRERRRLTLPLLAGIGGILVPIAIYLAFNAGRPTAVGWGVVMATDTALALGMLAVLGPRFSDRLRNFLLTVAVVDDLIVIAVLAIAYPEHPSPTALFVAAGIFALVLLIRAAGGRWGPGYLLLGVAAWLAVSESGVDPVVVGLVMGLLTYAYAPARTELQRAADRFRLFREQPSPQLARSVRAGLSAALSPNDRLQHIYHPWASYLIVPLFALANVGVVVDGELLARAATSPVTLGVLFAYVVGKPAGIVIASMLVARLSHNRFRAPVGWAAIIGVGTVSGIGFTIALLIATHALHGPALDEAKIGILVATVGASLTTWLVFRLAARLPPARRARALLGVSEGIIDLMVPVDPDRDHVRGPREAPVTVVEYGDFECPYCGQAEPAVRELLTDFTNIRYVWRHLPLTDVHPYAQVAAEAAEAAGDQGAFWEMHDLLLAHQGELRPADLLGYAERLDLDLDRFREHLADRRGAVRIAEDVDGADLSSVSGTPTFFVNGRRHHGSYNIEALSAAVTSAFAGTRLRPRDDREPDRRREVGSEQPDEEPGT</sequence>
<protein>
    <recommendedName>
        <fullName evidence="1">Na(+)/H(+) antiporter NhaA 1</fullName>
    </recommendedName>
    <alternativeName>
        <fullName evidence="1">Sodium/proton antiporter NhaA 1</fullName>
    </alternativeName>
</protein>
<keyword id="KW-0050">Antiport</keyword>
<keyword id="KW-1003">Cell membrane</keyword>
<keyword id="KW-0406">Ion transport</keyword>
<keyword id="KW-0472">Membrane</keyword>
<keyword id="KW-0915">Sodium</keyword>
<keyword id="KW-0739">Sodium transport</keyword>
<keyword id="KW-0812">Transmembrane</keyword>
<keyword id="KW-1133">Transmembrane helix</keyword>
<keyword id="KW-0813">Transport</keyword>
<dbReference type="EMBL" id="CP000850">
    <property type="protein sequence ID" value="ABV97546.1"/>
    <property type="molecule type" value="Genomic_DNA"/>
</dbReference>
<dbReference type="SMR" id="A8LVS8"/>
<dbReference type="STRING" id="391037.Sare_1658"/>
<dbReference type="KEGG" id="saq:Sare_1658"/>
<dbReference type="PATRIC" id="fig|391037.6.peg.1684"/>
<dbReference type="eggNOG" id="COG1651">
    <property type="taxonomic scope" value="Bacteria"/>
</dbReference>
<dbReference type="eggNOG" id="COG3004">
    <property type="taxonomic scope" value="Bacteria"/>
</dbReference>
<dbReference type="HOGENOM" id="CLU_015803_3_0_11"/>
<dbReference type="OrthoDB" id="117402at2"/>
<dbReference type="GO" id="GO:0005886">
    <property type="term" value="C:plasma membrane"/>
    <property type="evidence" value="ECO:0007669"/>
    <property type="project" value="UniProtKB-SubCell"/>
</dbReference>
<dbReference type="GO" id="GO:0015385">
    <property type="term" value="F:sodium:proton antiporter activity"/>
    <property type="evidence" value="ECO:0007669"/>
    <property type="project" value="TreeGrafter"/>
</dbReference>
<dbReference type="GO" id="GO:0006885">
    <property type="term" value="P:regulation of pH"/>
    <property type="evidence" value="ECO:0007669"/>
    <property type="project" value="InterPro"/>
</dbReference>
<dbReference type="Gene3D" id="3.40.30.10">
    <property type="entry name" value="Glutaredoxin"/>
    <property type="match status" value="1"/>
</dbReference>
<dbReference type="Gene3D" id="1.20.1530.10">
    <property type="entry name" value="Na+/H+ antiporter like domain"/>
    <property type="match status" value="1"/>
</dbReference>
<dbReference type="HAMAP" id="MF_01844">
    <property type="entry name" value="NhaA"/>
    <property type="match status" value="1"/>
</dbReference>
<dbReference type="InterPro" id="IPR023171">
    <property type="entry name" value="Na/H_antiporter_dom_sf"/>
</dbReference>
<dbReference type="InterPro" id="IPR004670">
    <property type="entry name" value="NhaA"/>
</dbReference>
<dbReference type="InterPro" id="IPR012336">
    <property type="entry name" value="Thioredoxin-like_fold"/>
</dbReference>
<dbReference type="InterPro" id="IPR036249">
    <property type="entry name" value="Thioredoxin-like_sf"/>
</dbReference>
<dbReference type="InterPro" id="IPR013766">
    <property type="entry name" value="Thioredoxin_domain"/>
</dbReference>
<dbReference type="NCBIfam" id="TIGR00773">
    <property type="entry name" value="NhaA"/>
    <property type="match status" value="1"/>
</dbReference>
<dbReference type="PANTHER" id="PTHR30341:SF0">
    <property type="entry name" value="NA(+)_H(+) ANTIPORTER NHAA"/>
    <property type="match status" value="1"/>
</dbReference>
<dbReference type="PANTHER" id="PTHR30341">
    <property type="entry name" value="SODIUM ION/PROTON ANTIPORTER NHAA-RELATED"/>
    <property type="match status" value="1"/>
</dbReference>
<dbReference type="Pfam" id="PF06965">
    <property type="entry name" value="Na_H_antiport_1"/>
    <property type="match status" value="1"/>
</dbReference>
<dbReference type="Pfam" id="PF13462">
    <property type="entry name" value="Thioredoxin_4"/>
    <property type="match status" value="1"/>
</dbReference>
<dbReference type="SUPFAM" id="SSF52833">
    <property type="entry name" value="Thioredoxin-like"/>
    <property type="match status" value="1"/>
</dbReference>
<dbReference type="PROSITE" id="PS51352">
    <property type="entry name" value="THIOREDOXIN_2"/>
    <property type="match status" value="1"/>
</dbReference>
<evidence type="ECO:0000255" key="1">
    <source>
        <dbReference type="HAMAP-Rule" id="MF_01844"/>
    </source>
</evidence>
<evidence type="ECO:0000256" key="2">
    <source>
        <dbReference type="SAM" id="MobiDB-lite"/>
    </source>
</evidence>
<evidence type="ECO:0000305" key="3"/>
<comment type="function">
    <text evidence="1">Na(+)/H(+) antiporter that extrudes sodium in exchange for external protons.</text>
</comment>
<comment type="catalytic activity">
    <reaction evidence="1">
        <text>Na(+)(in) + 2 H(+)(out) = Na(+)(out) + 2 H(+)(in)</text>
        <dbReference type="Rhea" id="RHEA:29251"/>
        <dbReference type="ChEBI" id="CHEBI:15378"/>
        <dbReference type="ChEBI" id="CHEBI:29101"/>
    </reaction>
    <physiologicalReaction direction="left-to-right" evidence="1">
        <dbReference type="Rhea" id="RHEA:29252"/>
    </physiologicalReaction>
</comment>
<comment type="subcellular location">
    <subcellularLocation>
        <location evidence="1">Cell membrane</location>
        <topology evidence="1">Multi-pass membrane protein</topology>
    </subcellularLocation>
</comment>
<comment type="similarity">
    <text evidence="3">In the N-terminal section; belongs to the NhaA Na(+)/H(+) (TC 2.A.33) antiporter family.</text>
</comment>
<reference key="1">
    <citation type="submission" date="2007-10" db="EMBL/GenBank/DDBJ databases">
        <title>Complete sequence of Salinispora arenicola CNS-205.</title>
        <authorList>
            <consortium name="US DOE Joint Genome Institute"/>
            <person name="Copeland A."/>
            <person name="Lucas S."/>
            <person name="Lapidus A."/>
            <person name="Barry K."/>
            <person name="Glavina del Rio T."/>
            <person name="Dalin E."/>
            <person name="Tice H."/>
            <person name="Pitluck S."/>
            <person name="Foster B."/>
            <person name="Schmutz J."/>
            <person name="Larimer F."/>
            <person name="Land M."/>
            <person name="Hauser L."/>
            <person name="Kyrpides N."/>
            <person name="Ivanova N."/>
            <person name="Jensen P.R."/>
            <person name="Moore B.S."/>
            <person name="Penn K."/>
            <person name="Jenkins C."/>
            <person name="Udwary D."/>
            <person name="Xiang L."/>
            <person name="Gontang E."/>
            <person name="Richardson P."/>
        </authorList>
    </citation>
    <scope>NUCLEOTIDE SEQUENCE [LARGE SCALE GENOMIC DNA]</scope>
    <source>
        <strain>CNS-205</strain>
    </source>
</reference>
<gene>
    <name evidence="1" type="primary">nhaA1</name>
    <name type="ordered locus">Sare_1658</name>
</gene>